<protein>
    <recommendedName>
        <fullName evidence="1">Malate synthase G</fullName>
        <ecNumber evidence="1">2.3.3.9</ecNumber>
    </recommendedName>
</protein>
<name>MASZ_MARN8</name>
<keyword id="KW-0963">Cytoplasm</keyword>
<keyword id="KW-0329">Glyoxylate bypass</keyword>
<keyword id="KW-0460">Magnesium</keyword>
<keyword id="KW-0479">Metal-binding</keyword>
<keyword id="KW-0558">Oxidation</keyword>
<keyword id="KW-0808">Transferase</keyword>
<keyword id="KW-0816">Tricarboxylic acid cycle</keyword>
<accession>A1U1Q6</accession>
<gene>
    <name evidence="1" type="primary">glcB</name>
    <name type="ordered locus">Maqu_1843</name>
</gene>
<evidence type="ECO:0000255" key="1">
    <source>
        <dbReference type="HAMAP-Rule" id="MF_00641"/>
    </source>
</evidence>
<dbReference type="EC" id="2.3.3.9" evidence="1"/>
<dbReference type="EMBL" id="CP000514">
    <property type="protein sequence ID" value="ABM18925.1"/>
    <property type="molecule type" value="Genomic_DNA"/>
</dbReference>
<dbReference type="RefSeq" id="WP_011785321.1">
    <property type="nucleotide sequence ID" value="NC_008740.1"/>
</dbReference>
<dbReference type="SMR" id="A1U1Q6"/>
<dbReference type="STRING" id="351348.Maqu_1843"/>
<dbReference type="KEGG" id="maq:Maqu_1843"/>
<dbReference type="eggNOG" id="COG2225">
    <property type="taxonomic scope" value="Bacteria"/>
</dbReference>
<dbReference type="HOGENOM" id="CLU_028446_1_0_6"/>
<dbReference type="OrthoDB" id="9762054at2"/>
<dbReference type="UniPathway" id="UPA00703">
    <property type="reaction ID" value="UER00720"/>
</dbReference>
<dbReference type="Proteomes" id="UP000000998">
    <property type="component" value="Chromosome"/>
</dbReference>
<dbReference type="GO" id="GO:0005829">
    <property type="term" value="C:cytosol"/>
    <property type="evidence" value="ECO:0007669"/>
    <property type="project" value="TreeGrafter"/>
</dbReference>
<dbReference type="GO" id="GO:0000287">
    <property type="term" value="F:magnesium ion binding"/>
    <property type="evidence" value="ECO:0007669"/>
    <property type="project" value="TreeGrafter"/>
</dbReference>
<dbReference type="GO" id="GO:0004474">
    <property type="term" value="F:malate synthase activity"/>
    <property type="evidence" value="ECO:0007669"/>
    <property type="project" value="UniProtKB-UniRule"/>
</dbReference>
<dbReference type="GO" id="GO:0009436">
    <property type="term" value="P:glyoxylate catabolic process"/>
    <property type="evidence" value="ECO:0007669"/>
    <property type="project" value="TreeGrafter"/>
</dbReference>
<dbReference type="GO" id="GO:0006097">
    <property type="term" value="P:glyoxylate cycle"/>
    <property type="evidence" value="ECO:0007669"/>
    <property type="project" value="UniProtKB-UniRule"/>
</dbReference>
<dbReference type="GO" id="GO:0006099">
    <property type="term" value="P:tricarboxylic acid cycle"/>
    <property type="evidence" value="ECO:0007669"/>
    <property type="project" value="UniProtKB-KW"/>
</dbReference>
<dbReference type="CDD" id="cd00728">
    <property type="entry name" value="malate_synt_G"/>
    <property type="match status" value="1"/>
</dbReference>
<dbReference type="FunFam" id="3.20.20.360:FF:000002">
    <property type="entry name" value="Malate synthase G"/>
    <property type="match status" value="1"/>
</dbReference>
<dbReference type="Gene3D" id="3.20.20.360">
    <property type="entry name" value="Malate synthase, domain 3"/>
    <property type="match status" value="2"/>
</dbReference>
<dbReference type="Gene3D" id="1.20.1220.12">
    <property type="entry name" value="Malate synthase, domain III"/>
    <property type="match status" value="1"/>
</dbReference>
<dbReference type="HAMAP" id="MF_00641">
    <property type="entry name" value="Malate_synth_G"/>
    <property type="match status" value="1"/>
</dbReference>
<dbReference type="InterPro" id="IPR044856">
    <property type="entry name" value="Malate_synth_C_sf"/>
</dbReference>
<dbReference type="InterPro" id="IPR011076">
    <property type="entry name" value="Malate_synth_sf"/>
</dbReference>
<dbReference type="InterPro" id="IPR001465">
    <property type="entry name" value="Malate_synthase_TIM"/>
</dbReference>
<dbReference type="InterPro" id="IPR006253">
    <property type="entry name" value="Malate_synthG"/>
</dbReference>
<dbReference type="InterPro" id="IPR048355">
    <property type="entry name" value="MS_C"/>
</dbReference>
<dbReference type="InterPro" id="IPR048356">
    <property type="entry name" value="MS_N"/>
</dbReference>
<dbReference type="InterPro" id="IPR046363">
    <property type="entry name" value="MS_N_TIM-barrel_dom"/>
</dbReference>
<dbReference type="InterPro" id="IPR048357">
    <property type="entry name" value="MSG_insertion"/>
</dbReference>
<dbReference type="NCBIfam" id="TIGR01345">
    <property type="entry name" value="malate_syn_G"/>
    <property type="match status" value="1"/>
</dbReference>
<dbReference type="NCBIfam" id="NF002825">
    <property type="entry name" value="PRK02999.1"/>
    <property type="match status" value="1"/>
</dbReference>
<dbReference type="PANTHER" id="PTHR42739">
    <property type="entry name" value="MALATE SYNTHASE G"/>
    <property type="match status" value="1"/>
</dbReference>
<dbReference type="PANTHER" id="PTHR42739:SF1">
    <property type="entry name" value="MALATE SYNTHASE G"/>
    <property type="match status" value="1"/>
</dbReference>
<dbReference type="Pfam" id="PF20659">
    <property type="entry name" value="MS_C"/>
    <property type="match status" value="1"/>
</dbReference>
<dbReference type="Pfam" id="PF20656">
    <property type="entry name" value="MS_N"/>
    <property type="match status" value="1"/>
</dbReference>
<dbReference type="Pfam" id="PF01274">
    <property type="entry name" value="MS_TIM-barrel"/>
    <property type="match status" value="1"/>
</dbReference>
<dbReference type="Pfam" id="PF20658">
    <property type="entry name" value="MSG_insertion"/>
    <property type="match status" value="1"/>
</dbReference>
<dbReference type="SUPFAM" id="SSF51645">
    <property type="entry name" value="Malate synthase G"/>
    <property type="match status" value="1"/>
</dbReference>
<feature type="chain" id="PRO_1000130890" description="Malate synthase G">
    <location>
        <begin position="1"/>
        <end position="726"/>
    </location>
</feature>
<feature type="active site" description="Proton acceptor" evidence="1">
    <location>
        <position position="340"/>
    </location>
</feature>
<feature type="active site" description="Proton donor" evidence="1">
    <location>
        <position position="632"/>
    </location>
</feature>
<feature type="binding site" evidence="1">
    <location>
        <position position="118"/>
    </location>
    <ligand>
        <name>acetyl-CoA</name>
        <dbReference type="ChEBI" id="CHEBI:57288"/>
    </ligand>
</feature>
<feature type="binding site" evidence="1">
    <location>
        <begin position="125"/>
        <end position="126"/>
    </location>
    <ligand>
        <name>acetyl-CoA</name>
        <dbReference type="ChEBI" id="CHEBI:57288"/>
    </ligand>
</feature>
<feature type="binding site" evidence="1">
    <location>
        <position position="276"/>
    </location>
    <ligand>
        <name>acetyl-CoA</name>
        <dbReference type="ChEBI" id="CHEBI:57288"/>
    </ligand>
</feature>
<feature type="binding site" evidence="1">
    <location>
        <position position="313"/>
    </location>
    <ligand>
        <name>acetyl-CoA</name>
        <dbReference type="ChEBI" id="CHEBI:57288"/>
    </ligand>
</feature>
<feature type="binding site" evidence="1">
    <location>
        <position position="340"/>
    </location>
    <ligand>
        <name>glyoxylate</name>
        <dbReference type="ChEBI" id="CHEBI:36655"/>
    </ligand>
</feature>
<feature type="binding site" evidence="1">
    <location>
        <position position="432"/>
    </location>
    <ligand>
        <name>glyoxylate</name>
        <dbReference type="ChEBI" id="CHEBI:36655"/>
    </ligand>
</feature>
<feature type="binding site" evidence="1">
    <location>
        <position position="432"/>
    </location>
    <ligand>
        <name>Mg(2+)</name>
        <dbReference type="ChEBI" id="CHEBI:18420"/>
    </ligand>
</feature>
<feature type="binding site" evidence="1">
    <location>
        <begin position="457"/>
        <end position="460"/>
    </location>
    <ligand>
        <name>glyoxylate</name>
        <dbReference type="ChEBI" id="CHEBI:36655"/>
    </ligand>
</feature>
<feature type="binding site" evidence="1">
    <location>
        <position position="460"/>
    </location>
    <ligand>
        <name>Mg(2+)</name>
        <dbReference type="ChEBI" id="CHEBI:18420"/>
    </ligand>
</feature>
<feature type="binding site" evidence="1">
    <location>
        <position position="541"/>
    </location>
    <ligand>
        <name>acetyl-CoA</name>
        <dbReference type="ChEBI" id="CHEBI:57288"/>
    </ligand>
</feature>
<feature type="modified residue" description="Cysteine sulfenic acid (-SOH)" evidence="1">
    <location>
        <position position="618"/>
    </location>
</feature>
<proteinExistence type="inferred from homology"/>
<sequence>MTERVQVGGIQIAKNLYDFVNNEAIPGTGIEADKFWAEFDKIVNELAPRNRELLLKRDEIQEKMDTWNREHKGQKLDMAEYKAFLKDIGYLVDEPADFKISTSNVDPEIATMAGPQLVVPVMNARFALNAANARWGSLYDALYGTDAISEENGAEKGRGYNPVRGAKVIEWARNLLDGSAPLASGSHKDAAKYYIDGGKLAVKLQNGDVTGLKDESGFVGYTGAADAPTGVLLVKNGMHFEIQIDASHPIGKDDGAHVKDVLMESALTTIMDCEDSVAAVDADDKVVAYKNWLGLMKGDLEESFEKGGQMMTRRMNGDRTYTGADGSELTLKGRSLLFVRNVGHLMTNPAILLKDGSEIPEGLMDGLVTSLIAIHDLKGDGKFQNSTKGSVYIVKPKQHGPEEVAFTNEFFGRVEDALGLPRFTLKVGIMDEERRTTVNLKACIHAAKERTVFINTGFLDRTGDEIHTSMELGPFIRKGPMKQAAWINAYEQWNVDIGLEAGLSGVAQIGKGMWAMPDLMAGMLEAKIGHPKAGANTAWVPSPTAATLHATHYHQVNVFDVQKELANRQRASLDDILTVPVMEDPSSLSAEDIQQELDNNAQGILGYVVRWIDQGVGCSKVPDINDVGLMEDRATLRISSQLLTNWLYHGICSEEQIMETMKRMAAVVDKQNAGDAAYRNMAPNFDDSIAFQAAVDLVLKGREQPAGYTEPLLHAYRQKAKAKYGQ</sequence>
<organism>
    <name type="scientific">Marinobacter nauticus (strain ATCC 700491 / DSM 11845 / VT8)</name>
    <name type="common">Marinobacter aquaeolei</name>
    <dbReference type="NCBI Taxonomy" id="351348"/>
    <lineage>
        <taxon>Bacteria</taxon>
        <taxon>Pseudomonadati</taxon>
        <taxon>Pseudomonadota</taxon>
        <taxon>Gammaproteobacteria</taxon>
        <taxon>Pseudomonadales</taxon>
        <taxon>Marinobacteraceae</taxon>
        <taxon>Marinobacter</taxon>
    </lineage>
</organism>
<comment type="function">
    <text evidence="1">Involved in the glycolate utilization. Catalyzes the condensation and subsequent hydrolysis of acetyl-coenzyme A (acetyl-CoA) and glyoxylate to form malate and CoA.</text>
</comment>
<comment type="catalytic activity">
    <reaction evidence="1">
        <text>glyoxylate + acetyl-CoA + H2O = (S)-malate + CoA + H(+)</text>
        <dbReference type="Rhea" id="RHEA:18181"/>
        <dbReference type="ChEBI" id="CHEBI:15377"/>
        <dbReference type="ChEBI" id="CHEBI:15378"/>
        <dbReference type="ChEBI" id="CHEBI:15589"/>
        <dbReference type="ChEBI" id="CHEBI:36655"/>
        <dbReference type="ChEBI" id="CHEBI:57287"/>
        <dbReference type="ChEBI" id="CHEBI:57288"/>
        <dbReference type="EC" id="2.3.3.9"/>
    </reaction>
</comment>
<comment type="cofactor">
    <cofactor evidence="1">
        <name>Mg(2+)</name>
        <dbReference type="ChEBI" id="CHEBI:18420"/>
    </cofactor>
</comment>
<comment type="pathway">
    <text evidence="1">Carbohydrate metabolism; glyoxylate cycle; (S)-malate from isocitrate: step 2/2.</text>
</comment>
<comment type="subunit">
    <text evidence="1">Monomer.</text>
</comment>
<comment type="subcellular location">
    <subcellularLocation>
        <location evidence="1">Cytoplasm</location>
    </subcellularLocation>
</comment>
<comment type="similarity">
    <text evidence="1">Belongs to the malate synthase family. GlcB subfamily.</text>
</comment>
<reference key="1">
    <citation type="journal article" date="2011" name="Appl. Environ. Microbiol.">
        <title>Genomic potential of Marinobacter aquaeolei, a biogeochemical 'opportunitroph'.</title>
        <authorList>
            <person name="Singer E."/>
            <person name="Webb E.A."/>
            <person name="Nelson W.C."/>
            <person name="Heidelberg J.F."/>
            <person name="Ivanova N."/>
            <person name="Pati A."/>
            <person name="Edwards K.J."/>
        </authorList>
    </citation>
    <scope>NUCLEOTIDE SEQUENCE [LARGE SCALE GENOMIC DNA]</scope>
    <source>
        <strain>ATCC 700491 / DSM 11845 / VT8</strain>
    </source>
</reference>